<feature type="chain" id="PRO_0000410093" description="Galactose-1-phosphate uridylyltransferase">
    <location>
        <begin position="1"/>
        <end position="381"/>
    </location>
</feature>
<feature type="active site" description="Tele-UMP-histidine intermediate" evidence="3">
    <location>
        <position position="188"/>
    </location>
</feature>
<feature type="binding site" evidence="3">
    <location>
        <position position="65"/>
    </location>
    <ligand>
        <name>Zn(2+)</name>
        <dbReference type="ChEBI" id="CHEBI:29105"/>
    </ligand>
</feature>
<feature type="binding site" evidence="3">
    <location>
        <position position="68"/>
    </location>
    <ligand>
        <name>Zn(2+)</name>
        <dbReference type="ChEBI" id="CHEBI:29105"/>
    </ligand>
</feature>
<feature type="binding site" description="in other chain" evidence="1">
    <location>
        <begin position="90"/>
        <end position="91"/>
    </location>
    <ligand>
        <name>UDP-alpha-D-glucose</name>
        <dbReference type="ChEBI" id="CHEBI:58885"/>
        <note>ligand shared between dimeric partners</note>
    </ligand>
</feature>
<feature type="binding site" evidence="3">
    <location>
        <position position="131"/>
    </location>
    <ligand>
        <name>Zn(2+)</name>
        <dbReference type="ChEBI" id="CHEBI:29105"/>
    </ligand>
</feature>
<feature type="binding site" evidence="1">
    <location>
        <position position="175"/>
    </location>
    <ligand>
        <name>UDP-alpha-D-glucose</name>
        <dbReference type="ChEBI" id="CHEBI:58885"/>
        <note>ligand shared between dimeric partners</note>
    </ligand>
</feature>
<feature type="binding site" evidence="3">
    <location>
        <position position="186"/>
    </location>
    <ligand>
        <name>Zn(2+)</name>
        <dbReference type="ChEBI" id="CHEBI:29105"/>
    </ligand>
</feature>
<feature type="binding site" description="in other chain" evidence="1">
    <location>
        <position position="190"/>
    </location>
    <ligand>
        <name>UDP-alpha-D-glucose</name>
        <dbReference type="ChEBI" id="CHEBI:58885"/>
        <note>ligand shared between dimeric partners</note>
    </ligand>
</feature>
<feature type="binding site" evidence="2">
    <location>
        <position position="204"/>
    </location>
    <ligand>
        <name>Fe cation</name>
        <dbReference type="ChEBI" id="CHEBI:24875"/>
    </ligand>
</feature>
<feature type="binding site" evidence="2">
    <location>
        <position position="306"/>
    </location>
    <ligand>
        <name>Fe cation</name>
        <dbReference type="ChEBI" id="CHEBI:24875"/>
    </ligand>
</feature>
<feature type="binding site" evidence="2">
    <location>
        <position position="323"/>
    </location>
    <ligand>
        <name>Fe cation</name>
        <dbReference type="ChEBI" id="CHEBI:24875"/>
    </ligand>
</feature>
<feature type="binding site" evidence="2">
    <location>
        <position position="325"/>
    </location>
    <ligand>
        <name>Fe cation</name>
        <dbReference type="ChEBI" id="CHEBI:24875"/>
    </ligand>
</feature>
<feature type="binding site" description="in other chain" evidence="1">
    <location>
        <begin position="338"/>
        <end position="341"/>
    </location>
    <ligand>
        <name>UDP-alpha-D-glucose</name>
        <dbReference type="ChEBI" id="CHEBI:58885"/>
        <note>ligand shared between dimeric partners</note>
    </ligand>
</feature>
<feature type="binding site" description="in other chain" evidence="1">
    <location>
        <begin position="343"/>
        <end position="344"/>
    </location>
    <ligand>
        <name>UDP-alpha-D-glucose</name>
        <dbReference type="ChEBI" id="CHEBI:58885"/>
        <note>ligand shared between dimeric partners</note>
    </ligand>
</feature>
<organism>
    <name type="scientific">Cryptococcus neoformans var. neoformans serotype D (strain B-3501A)</name>
    <name type="common">Filobasidiella neoformans</name>
    <dbReference type="NCBI Taxonomy" id="283643"/>
    <lineage>
        <taxon>Eukaryota</taxon>
        <taxon>Fungi</taxon>
        <taxon>Dikarya</taxon>
        <taxon>Basidiomycota</taxon>
        <taxon>Agaricomycotina</taxon>
        <taxon>Tremellomycetes</taxon>
        <taxon>Tremellales</taxon>
        <taxon>Cryptococcaceae</taxon>
        <taxon>Cryptococcus</taxon>
        <taxon>Cryptococcus neoformans species complex</taxon>
    </lineage>
</organism>
<comment type="catalytic activity">
    <reaction evidence="2">
        <text>alpha-D-galactose 1-phosphate + UDP-alpha-D-glucose = alpha-D-glucose 1-phosphate + UDP-alpha-D-galactose</text>
        <dbReference type="Rhea" id="RHEA:13989"/>
        <dbReference type="ChEBI" id="CHEBI:58336"/>
        <dbReference type="ChEBI" id="CHEBI:58601"/>
        <dbReference type="ChEBI" id="CHEBI:58885"/>
        <dbReference type="ChEBI" id="CHEBI:66914"/>
        <dbReference type="EC" id="2.7.7.12"/>
    </reaction>
</comment>
<comment type="cofactor">
    <cofactor evidence="2">
        <name>Zn(2+)</name>
        <dbReference type="ChEBI" id="CHEBI:29105"/>
    </cofactor>
    <text evidence="2">Binds 1 zinc ion per subunit. Zinc binding seems to play a structural role.</text>
</comment>
<comment type="pathway">
    <text>Carbohydrate metabolism; galactose metabolism.</text>
</comment>
<comment type="subunit">
    <text evidence="1">Homodimer.</text>
</comment>
<comment type="similarity">
    <text evidence="4">Belongs to the galactose-1-phosphate uridylyltransferase type 1 family.</text>
</comment>
<gene>
    <name type="primary">GAL7</name>
    <name type="ordered locus">CNBM0540</name>
</gene>
<dbReference type="EC" id="2.7.7.12" evidence="2"/>
<dbReference type="EMBL" id="AAEY01000061">
    <property type="protein sequence ID" value="EAL17574.1"/>
    <property type="molecule type" value="Genomic_DNA"/>
</dbReference>
<dbReference type="RefSeq" id="XP_772221.1">
    <property type="nucleotide sequence ID" value="XM_767128.1"/>
</dbReference>
<dbReference type="SMR" id="P0CN77"/>
<dbReference type="EnsemblFungi" id="AAW46832">
    <property type="protein sequence ID" value="AAW46832"/>
    <property type="gene ID" value="CNM00620"/>
</dbReference>
<dbReference type="GeneID" id="4939414"/>
<dbReference type="KEGG" id="cnb:CNBM0540"/>
<dbReference type="VEuPathDB" id="FungiDB:CNBM0540"/>
<dbReference type="HOGENOM" id="CLU_029960_0_0_1"/>
<dbReference type="OrthoDB" id="3040at5206"/>
<dbReference type="UniPathway" id="UPA00214"/>
<dbReference type="GO" id="GO:0005737">
    <property type="term" value="C:cytoplasm"/>
    <property type="evidence" value="ECO:0007669"/>
    <property type="project" value="TreeGrafter"/>
</dbReference>
<dbReference type="GO" id="GO:0008108">
    <property type="term" value="F:UDP-glucose:hexose-1-phosphate uridylyltransferase activity"/>
    <property type="evidence" value="ECO:0007669"/>
    <property type="project" value="UniProtKB-EC"/>
</dbReference>
<dbReference type="GO" id="GO:0008270">
    <property type="term" value="F:zinc ion binding"/>
    <property type="evidence" value="ECO:0007669"/>
    <property type="project" value="InterPro"/>
</dbReference>
<dbReference type="GO" id="GO:0033499">
    <property type="term" value="P:galactose catabolic process via UDP-galactose, Leloir pathway"/>
    <property type="evidence" value="ECO:0007669"/>
    <property type="project" value="TreeGrafter"/>
</dbReference>
<dbReference type="CDD" id="cd00608">
    <property type="entry name" value="GalT"/>
    <property type="match status" value="1"/>
</dbReference>
<dbReference type="FunFam" id="3.30.428.10:FF:000001">
    <property type="entry name" value="Galactose-1-phosphate uridylyltransferase"/>
    <property type="match status" value="1"/>
</dbReference>
<dbReference type="FunFam" id="3.30.428.10:FF:000002">
    <property type="entry name" value="Galactose-1-phosphate uridylyltransferase"/>
    <property type="match status" value="1"/>
</dbReference>
<dbReference type="Gene3D" id="3.30.428.10">
    <property type="entry name" value="HIT-like"/>
    <property type="match status" value="2"/>
</dbReference>
<dbReference type="InterPro" id="IPR001937">
    <property type="entry name" value="GalP_UDPtransf1"/>
</dbReference>
<dbReference type="InterPro" id="IPR019779">
    <property type="entry name" value="GalP_UDPtransf1_His-AS"/>
</dbReference>
<dbReference type="InterPro" id="IPR005850">
    <property type="entry name" value="GalP_Utransf_C"/>
</dbReference>
<dbReference type="InterPro" id="IPR005849">
    <property type="entry name" value="GalP_Utransf_N"/>
</dbReference>
<dbReference type="InterPro" id="IPR036265">
    <property type="entry name" value="HIT-like_sf"/>
</dbReference>
<dbReference type="NCBIfam" id="TIGR00209">
    <property type="entry name" value="galT_1"/>
    <property type="match status" value="1"/>
</dbReference>
<dbReference type="NCBIfam" id="NF008724">
    <property type="entry name" value="PRK11720.1"/>
    <property type="match status" value="1"/>
</dbReference>
<dbReference type="PANTHER" id="PTHR11943">
    <property type="entry name" value="GALACTOSE-1-PHOSPHATE URIDYLYLTRANSFERASE"/>
    <property type="match status" value="1"/>
</dbReference>
<dbReference type="PANTHER" id="PTHR11943:SF1">
    <property type="entry name" value="GALACTOSE-1-PHOSPHATE URIDYLYLTRANSFERASE"/>
    <property type="match status" value="1"/>
</dbReference>
<dbReference type="Pfam" id="PF02744">
    <property type="entry name" value="GalP_UDP_tr_C"/>
    <property type="match status" value="1"/>
</dbReference>
<dbReference type="Pfam" id="PF01087">
    <property type="entry name" value="GalP_UDP_transf"/>
    <property type="match status" value="1"/>
</dbReference>
<dbReference type="PIRSF" id="PIRSF000808">
    <property type="entry name" value="GalT"/>
    <property type="match status" value="1"/>
</dbReference>
<dbReference type="SUPFAM" id="SSF54197">
    <property type="entry name" value="HIT-like"/>
    <property type="match status" value="2"/>
</dbReference>
<dbReference type="PROSITE" id="PS00117">
    <property type="entry name" value="GAL_P_UDP_TRANSF_I"/>
    <property type="match status" value="1"/>
</dbReference>
<name>GAL7_CRYNB</name>
<evidence type="ECO:0000250" key="1">
    <source>
        <dbReference type="UniProtKB" id="P07902"/>
    </source>
</evidence>
<evidence type="ECO:0000250" key="2">
    <source>
        <dbReference type="UniProtKB" id="P09148"/>
    </source>
</evidence>
<evidence type="ECO:0000255" key="3">
    <source>
        <dbReference type="PROSITE-ProRule" id="PRU10033"/>
    </source>
</evidence>
<evidence type="ECO:0000305" key="4"/>
<reference key="1">
    <citation type="journal article" date="2005" name="Science">
        <title>The genome of the basidiomycetous yeast and human pathogen Cryptococcus neoformans.</title>
        <authorList>
            <person name="Loftus B.J."/>
            <person name="Fung E."/>
            <person name="Roncaglia P."/>
            <person name="Rowley D."/>
            <person name="Amedeo P."/>
            <person name="Bruno D."/>
            <person name="Vamathevan J."/>
            <person name="Miranda M."/>
            <person name="Anderson I.J."/>
            <person name="Fraser J.A."/>
            <person name="Allen J.E."/>
            <person name="Bosdet I.E."/>
            <person name="Brent M.R."/>
            <person name="Chiu R."/>
            <person name="Doering T.L."/>
            <person name="Donlin M.J."/>
            <person name="D'Souza C.A."/>
            <person name="Fox D.S."/>
            <person name="Grinberg V."/>
            <person name="Fu J."/>
            <person name="Fukushima M."/>
            <person name="Haas B.J."/>
            <person name="Huang J.C."/>
            <person name="Janbon G."/>
            <person name="Jones S.J.M."/>
            <person name="Koo H.L."/>
            <person name="Krzywinski M.I."/>
            <person name="Kwon-Chung K.J."/>
            <person name="Lengeler K.B."/>
            <person name="Maiti R."/>
            <person name="Marra M.A."/>
            <person name="Marra R.E."/>
            <person name="Mathewson C.A."/>
            <person name="Mitchell T.G."/>
            <person name="Pertea M."/>
            <person name="Riggs F.R."/>
            <person name="Salzberg S.L."/>
            <person name="Schein J.E."/>
            <person name="Shvartsbeyn A."/>
            <person name="Shin H."/>
            <person name="Shumway M."/>
            <person name="Specht C.A."/>
            <person name="Suh B.B."/>
            <person name="Tenney A."/>
            <person name="Utterback T.R."/>
            <person name="Wickes B.L."/>
            <person name="Wortman J.R."/>
            <person name="Wye N.H."/>
            <person name="Kronstad J.W."/>
            <person name="Lodge J.K."/>
            <person name="Heitman J."/>
            <person name="Davis R.W."/>
            <person name="Fraser C.M."/>
            <person name="Hyman R.W."/>
        </authorList>
    </citation>
    <scope>NUCLEOTIDE SEQUENCE [LARGE SCALE GENOMIC DNA]</scope>
    <source>
        <strain>B-3501A</strain>
    </source>
</reference>
<accession>P0CN77</accession>
<accession>P40908</accession>
<accession>Q55IG6</accession>
<accession>Q5K807</accession>
<sequence length="381" mass="43032">MTATHTHSNGSNDFTPVSINDHVHRRFNPLLGKHVLVSPHRSLRPWNGQKETPAIPVETPHDSKCYLCPGNKRTTGQHNPDYKGIYVFENDFPALLPDPLAVGTNKISDDPLFQSEPVRGRCKVICFHPRHDLTMAAMRISEINHVLDGWKDVYAEEGKIMQEESSDGCVQIFENRGAMMGCSAPHPHGQVWTTSFVPDEPATEIENFVRYASGRSGSHMLLDYALREVKARERVVTLHESGWVAVVPYWAAWPFEILLMPYKRHIPSILQLTAEEQTGLATILKDVLSRYDNLFSCPFPYSMGLHQSPLPPTDPTSNSAQVHFHFYPPLLRSATVRKFMVGFELLGEAQRDIVPEQAAVRLRESLPHKRATLSNDKPYNP</sequence>
<keyword id="KW-0119">Carbohydrate metabolism</keyword>
<keyword id="KW-0299">Galactose metabolism</keyword>
<keyword id="KW-0408">Iron</keyword>
<keyword id="KW-0479">Metal-binding</keyword>
<keyword id="KW-0548">Nucleotidyltransferase</keyword>
<keyword id="KW-0808">Transferase</keyword>
<keyword id="KW-0862">Zinc</keyword>
<proteinExistence type="inferred from homology"/>
<protein>
    <recommendedName>
        <fullName>Galactose-1-phosphate uridylyltransferase</fullName>
        <shortName>Gal-1-P uridylyltransferase</shortName>
        <ecNumber evidence="2">2.7.7.12</ecNumber>
    </recommendedName>
    <alternativeName>
        <fullName>UDP-glucose--hexose-1-phosphate uridylyltransferase</fullName>
    </alternativeName>
</protein>